<gene>
    <name type="ordered locus">YALI0B23122g</name>
</gene>
<reference key="1">
    <citation type="journal article" date="2004" name="Nature">
        <title>Genome evolution in yeasts.</title>
        <authorList>
            <person name="Dujon B."/>
            <person name="Sherman D."/>
            <person name="Fischer G."/>
            <person name="Durrens P."/>
            <person name="Casaregola S."/>
            <person name="Lafontaine I."/>
            <person name="de Montigny J."/>
            <person name="Marck C."/>
            <person name="Neuveglise C."/>
            <person name="Talla E."/>
            <person name="Goffard N."/>
            <person name="Frangeul L."/>
            <person name="Aigle M."/>
            <person name="Anthouard V."/>
            <person name="Babour A."/>
            <person name="Barbe V."/>
            <person name="Barnay S."/>
            <person name="Blanchin S."/>
            <person name="Beckerich J.-M."/>
            <person name="Beyne E."/>
            <person name="Bleykasten C."/>
            <person name="Boisrame A."/>
            <person name="Boyer J."/>
            <person name="Cattolico L."/>
            <person name="Confanioleri F."/>
            <person name="de Daruvar A."/>
            <person name="Despons L."/>
            <person name="Fabre E."/>
            <person name="Fairhead C."/>
            <person name="Ferry-Dumazet H."/>
            <person name="Groppi A."/>
            <person name="Hantraye F."/>
            <person name="Hennequin C."/>
            <person name="Jauniaux N."/>
            <person name="Joyet P."/>
            <person name="Kachouri R."/>
            <person name="Kerrest A."/>
            <person name="Koszul R."/>
            <person name="Lemaire M."/>
            <person name="Lesur I."/>
            <person name="Ma L."/>
            <person name="Muller H."/>
            <person name="Nicaud J.-M."/>
            <person name="Nikolski M."/>
            <person name="Oztas S."/>
            <person name="Ozier-Kalogeropoulos O."/>
            <person name="Pellenz S."/>
            <person name="Potier S."/>
            <person name="Richard G.-F."/>
            <person name="Straub M.-L."/>
            <person name="Suleau A."/>
            <person name="Swennen D."/>
            <person name="Tekaia F."/>
            <person name="Wesolowski-Louvel M."/>
            <person name="Westhof E."/>
            <person name="Wirth B."/>
            <person name="Zeniou-Meyer M."/>
            <person name="Zivanovic Y."/>
            <person name="Bolotin-Fukuhara M."/>
            <person name="Thierry A."/>
            <person name="Bouchier C."/>
            <person name="Caudron B."/>
            <person name="Scarpelli C."/>
            <person name="Gaillardin C."/>
            <person name="Weissenbach J."/>
            <person name="Wincker P."/>
            <person name="Souciet J.-L."/>
        </authorList>
    </citation>
    <scope>NUCLEOTIDE SEQUENCE [LARGE SCALE GENOMIC DNA]</scope>
    <source>
        <strain>CLIB 122 / E 150</strain>
    </source>
</reference>
<name>NNRE_YARLI</name>
<comment type="function">
    <text evidence="1">Catalyzes the epimerization of the S- and R-forms of NAD(P)HX, a damaged form of NAD(P)H that is a result of enzymatic or heat-dependent hydration. This is a prerequisite for the S-specific NAD(P)H-hydrate dehydratase to allow the repair of both epimers of NAD(P)HX.</text>
</comment>
<comment type="catalytic activity">
    <reaction>
        <text>(6R)-NADHX = (6S)-NADHX</text>
        <dbReference type="Rhea" id="RHEA:32215"/>
        <dbReference type="ChEBI" id="CHEBI:64074"/>
        <dbReference type="ChEBI" id="CHEBI:64075"/>
        <dbReference type="EC" id="5.1.99.6"/>
    </reaction>
</comment>
<comment type="catalytic activity">
    <reaction>
        <text>(6R)-NADPHX = (6S)-NADPHX</text>
        <dbReference type="Rhea" id="RHEA:32227"/>
        <dbReference type="ChEBI" id="CHEBI:64076"/>
        <dbReference type="ChEBI" id="CHEBI:64077"/>
        <dbReference type="EC" id="5.1.99.6"/>
    </reaction>
</comment>
<comment type="cofactor">
    <cofactor evidence="1">
        <name>K(+)</name>
        <dbReference type="ChEBI" id="CHEBI:29103"/>
    </cofactor>
    <text evidence="1">Binds 1 potassium ion per subunit.</text>
</comment>
<comment type="subcellular location">
    <subcellularLocation>
        <location evidence="1">Cytoplasm</location>
    </subcellularLocation>
    <subcellularLocation>
        <location evidence="1">Mitochondrion</location>
    </subcellularLocation>
</comment>
<comment type="similarity">
    <text evidence="1">Belongs to the NnrE/AIBP family.</text>
</comment>
<dbReference type="EC" id="5.1.99.6"/>
<dbReference type="EMBL" id="CR382128">
    <property type="protein sequence ID" value="CAG83505.1"/>
    <property type="molecule type" value="Genomic_DNA"/>
</dbReference>
<dbReference type="RefSeq" id="XP_501252.1">
    <property type="nucleotide sequence ID" value="XM_501252.1"/>
</dbReference>
<dbReference type="SMR" id="Q6CDL0"/>
<dbReference type="FunCoup" id="Q6CDL0">
    <property type="interactions" value="278"/>
</dbReference>
<dbReference type="STRING" id="284591.Q6CDL0"/>
<dbReference type="EnsemblFungi" id="CAG83505">
    <property type="protein sequence ID" value="CAG83505"/>
    <property type="gene ID" value="YALI0_B23122g"/>
</dbReference>
<dbReference type="KEGG" id="yli:2906778"/>
<dbReference type="VEuPathDB" id="FungiDB:YALI0_B23122g"/>
<dbReference type="HOGENOM" id="CLU_024853_3_0_1"/>
<dbReference type="InParanoid" id="Q6CDL0"/>
<dbReference type="OMA" id="RHLFHYG"/>
<dbReference type="OrthoDB" id="78153at4891"/>
<dbReference type="Proteomes" id="UP000001300">
    <property type="component" value="Chromosome B"/>
</dbReference>
<dbReference type="GO" id="GO:0005739">
    <property type="term" value="C:mitochondrion"/>
    <property type="evidence" value="ECO:0000318"/>
    <property type="project" value="GO_Central"/>
</dbReference>
<dbReference type="GO" id="GO:0046872">
    <property type="term" value="F:metal ion binding"/>
    <property type="evidence" value="ECO:0007669"/>
    <property type="project" value="UniProtKB-KW"/>
</dbReference>
<dbReference type="GO" id="GO:0052856">
    <property type="term" value="F:NAD(P)HX epimerase activity"/>
    <property type="evidence" value="ECO:0000318"/>
    <property type="project" value="GO_Central"/>
</dbReference>
<dbReference type="GO" id="GO:0000166">
    <property type="term" value="F:nucleotide binding"/>
    <property type="evidence" value="ECO:0007669"/>
    <property type="project" value="UniProtKB-KW"/>
</dbReference>
<dbReference type="FunFam" id="3.40.50.10260:FF:000005">
    <property type="entry name" value="NAD(P)H-hydrate epimerase"/>
    <property type="match status" value="1"/>
</dbReference>
<dbReference type="Gene3D" id="3.40.50.10260">
    <property type="entry name" value="YjeF N-terminal domain"/>
    <property type="match status" value="1"/>
</dbReference>
<dbReference type="HAMAP" id="MF_01966">
    <property type="entry name" value="NADHX_epimerase"/>
    <property type="match status" value="1"/>
</dbReference>
<dbReference type="InterPro" id="IPR004443">
    <property type="entry name" value="YjeF_N_dom"/>
</dbReference>
<dbReference type="InterPro" id="IPR036652">
    <property type="entry name" value="YjeF_N_dom_sf"/>
</dbReference>
<dbReference type="InterPro" id="IPR032976">
    <property type="entry name" value="YJEFN_prot_NAXE-like"/>
</dbReference>
<dbReference type="NCBIfam" id="TIGR00197">
    <property type="entry name" value="yjeF_nterm"/>
    <property type="match status" value="1"/>
</dbReference>
<dbReference type="PANTHER" id="PTHR13232">
    <property type="entry name" value="NAD(P)H-HYDRATE EPIMERASE"/>
    <property type="match status" value="1"/>
</dbReference>
<dbReference type="PANTHER" id="PTHR13232:SF10">
    <property type="entry name" value="NAD(P)H-HYDRATE EPIMERASE"/>
    <property type="match status" value="1"/>
</dbReference>
<dbReference type="Pfam" id="PF03853">
    <property type="entry name" value="YjeF_N"/>
    <property type="match status" value="1"/>
</dbReference>
<dbReference type="SUPFAM" id="SSF64153">
    <property type="entry name" value="YjeF N-terminal domain-like"/>
    <property type="match status" value="1"/>
</dbReference>
<dbReference type="PROSITE" id="PS51385">
    <property type="entry name" value="YJEF_N"/>
    <property type="match status" value="1"/>
</dbReference>
<organism>
    <name type="scientific">Yarrowia lipolytica (strain CLIB 122 / E 150)</name>
    <name type="common">Yeast</name>
    <name type="synonym">Candida lipolytica</name>
    <dbReference type="NCBI Taxonomy" id="284591"/>
    <lineage>
        <taxon>Eukaryota</taxon>
        <taxon>Fungi</taxon>
        <taxon>Dikarya</taxon>
        <taxon>Ascomycota</taxon>
        <taxon>Saccharomycotina</taxon>
        <taxon>Dipodascomycetes</taxon>
        <taxon>Dipodascales</taxon>
        <taxon>Dipodascales incertae sedis</taxon>
        <taxon>Yarrowia</taxon>
    </lineage>
</organism>
<accession>Q6CDL0</accession>
<protein>
    <recommendedName>
        <fullName evidence="1">NAD(P)H-hydrate epimerase</fullName>
        <ecNumber>5.1.99.6</ecNumber>
    </recommendedName>
    <alternativeName>
        <fullName evidence="1">NAD(P)HX epimerase</fullName>
    </alternativeName>
</protein>
<evidence type="ECO:0000255" key="1">
    <source>
        <dbReference type="HAMAP-Rule" id="MF_03159"/>
    </source>
</evidence>
<feature type="chain" id="PRO_0000416341" description="NAD(P)H-hydrate epimerase">
    <location>
        <begin position="1"/>
        <end position="245"/>
    </location>
</feature>
<feature type="domain" description="YjeF N-terminal" evidence="1">
    <location>
        <begin position="16"/>
        <end position="224"/>
    </location>
</feature>
<feature type="binding site" evidence="1">
    <location>
        <begin position="68"/>
        <end position="72"/>
    </location>
    <ligand>
        <name>(6S)-NADPHX</name>
        <dbReference type="ChEBI" id="CHEBI:64076"/>
    </ligand>
</feature>
<feature type="binding site" evidence="1">
    <location>
        <position position="69"/>
    </location>
    <ligand>
        <name>K(+)</name>
        <dbReference type="ChEBI" id="CHEBI:29103"/>
    </ligand>
</feature>
<feature type="binding site" evidence="1">
    <location>
        <position position="131"/>
    </location>
    <ligand>
        <name>K(+)</name>
        <dbReference type="ChEBI" id="CHEBI:29103"/>
    </ligand>
</feature>
<feature type="binding site" evidence="1">
    <location>
        <begin position="135"/>
        <end position="141"/>
    </location>
    <ligand>
        <name>(6S)-NADPHX</name>
        <dbReference type="ChEBI" id="CHEBI:64076"/>
    </ligand>
</feature>
<feature type="binding site" evidence="1">
    <location>
        <position position="164"/>
    </location>
    <ligand>
        <name>(6S)-NADPHX</name>
        <dbReference type="ChEBI" id="CHEBI:64076"/>
    </ligand>
</feature>
<feature type="binding site" evidence="1">
    <location>
        <position position="167"/>
    </location>
    <ligand>
        <name>K(+)</name>
        <dbReference type="ChEBI" id="CHEBI:29103"/>
    </ligand>
</feature>
<proteinExistence type="inferred from homology"/>
<keyword id="KW-0963">Cytoplasm</keyword>
<keyword id="KW-0413">Isomerase</keyword>
<keyword id="KW-0479">Metal-binding</keyword>
<keyword id="KW-0496">Mitochondrion</keyword>
<keyword id="KW-0520">NAD</keyword>
<keyword id="KW-0521">NADP</keyword>
<keyword id="KW-0547">Nucleotide-binding</keyword>
<keyword id="KW-0630">Potassium</keyword>
<keyword id="KW-1185">Reference proteome</keyword>
<sequence length="245" mass="26782">MLRVARIMKCLTSSKAAALDAELMAPSGGFSIDQLMELAGLSVAQAVYKYDKSLAQGKQVLVLVGPGNNGGDGLVAARHLCHLGAKPVIYYPKRTDRPLFNGLVTQLHNLDIKFLDDVNKSTFDSSAHVIDSLFGFSFKPPIREPFPKVIELLKETKTPTTSVDIPSSWDVDRGPEDDNAFQPSSLVSLTAPKGASRHLLPSTRHFLGGRFVSKHIADKYDLEVPAYEGLDHIVELTQNNKEAQI</sequence>